<evidence type="ECO:0000250" key="1">
    <source>
        <dbReference type="UniProtKB" id="Q8IWB7"/>
    </source>
</evidence>
<evidence type="ECO:0000255" key="2"/>
<evidence type="ECO:0000255" key="3">
    <source>
        <dbReference type="PROSITE-ProRule" id="PRU00091"/>
    </source>
</evidence>
<evidence type="ECO:0000269" key="4">
    <source>
    </source>
</evidence>
<evidence type="ECO:0000305" key="5"/>
<evidence type="ECO:0007744" key="6">
    <source>
    </source>
</evidence>
<evidence type="ECO:0007744" key="7">
    <source>
    </source>
</evidence>
<name>WDFY1_MOUSE</name>
<keyword id="KW-0967">Endosome</keyword>
<keyword id="KW-0479">Metal-binding</keyword>
<keyword id="KW-0597">Phosphoprotein</keyword>
<keyword id="KW-1185">Reference proteome</keyword>
<keyword id="KW-0677">Repeat</keyword>
<keyword id="KW-0853">WD repeat</keyword>
<keyword id="KW-0862">Zinc</keyword>
<keyword id="KW-0863">Zinc-finger</keyword>
<comment type="function">
    <text evidence="4">Positively regulates TLR3- and TLR4-mediated signaling pathways by bridging the interaction between TLR3 or TLR4 and TICAM1. Promotes TLR3/4 ligand-induced activation of transcription factors IRF3 and NF-kappa-B, as well as the production of IFN-beta and inflammatory cytokines (PubMed:25736436).</text>
</comment>
<comment type="subunit">
    <text evidence="1 4">Binds PtdIns3P in vitro with high specificity over other phosphoinositides (By similarity). Interacts (via WD repeat 2) with tyrosine-phosphorylated TLR3 (via TIR domain) in response to poly(I:C) (PubMed:25736436). Interacts with TLR4 in response to LPS (PubMed:25736436). Interacts with TICAM1 in response to poly(I:C) (PubMed:25736436).</text>
</comment>
<comment type="subcellular location">
    <subcellularLocation>
        <location evidence="1">Early endosome</location>
    </subcellularLocation>
</comment>
<comment type="domain">
    <text evidence="1">The FYVE-type zinc finger domain mediates interactions with phosphatidylinositol 3-phosphate in membranes of early endosomes and penetrates bilayers. The FYVE domain insertion into PtdIns(3)P-enriched membranes is substantially increased in acidic conditions. The FYVE domain is required for its function in regulating TLR3 signaling.</text>
</comment>
<comment type="sequence caution" evidence="5">
    <conflict type="erroneous initiation">
        <sequence resource="EMBL-CDS" id="BAD90445"/>
    </conflict>
    <text>Extended N-terminus.</text>
</comment>
<sequence>MAAEIHSRPQSSRPVLLSKIEGHQDAVTAALLIPKEDGVITASEDRTIRVWLKRDSGQYWPSIYHTMASPCSAMAYHHDSRRIFVGQDNGAVMEFHVSEDFNKMNFIKTYPAHQNRVSAIIFSLAAEWVISTGHDKCVSWMCTRSGNMLGRHFFSSWASCLQYDLDTQHAFVGDYSGQITLLKLEQNTCSVITTLKGHEGSIACLWWDPIQRLLFSGASDNSVIMWDIGGRKGRTLLLQGHHDRVQSLCYLQLTRQLVSCSADGGIAVWNMDVSREEAPQWLESDSCQKCEQPFFWNIKQMWDTKTLGLRQHHCRKCGQAVCGKCSSKRSSYPVMGFEFQVRVCDSCYDSIKDEDRTSLATFHEGKHNISHMSMDIARGLMVTCGTDRVVKIWDMTPVVGCSLATGFSPH</sequence>
<feature type="chain" id="PRO_0000434594" description="WD repeat and FYVE domain-containing protein 1">
    <location>
        <begin position="1"/>
        <end position="410"/>
    </location>
</feature>
<feature type="repeat" description="WD 1" evidence="2">
    <location>
        <begin position="22"/>
        <end position="61"/>
    </location>
</feature>
<feature type="repeat" description="WD 2" evidence="2">
    <location>
        <begin position="66"/>
        <end position="105"/>
    </location>
</feature>
<feature type="repeat" description="WD 3" evidence="2">
    <location>
        <begin position="112"/>
        <end position="150"/>
    </location>
</feature>
<feature type="repeat" description="WD 4" evidence="2">
    <location>
        <begin position="153"/>
        <end position="192"/>
    </location>
</feature>
<feature type="repeat" description="WD 5" evidence="2">
    <location>
        <begin position="197"/>
        <end position="236"/>
    </location>
</feature>
<feature type="repeat" description="WD 6" evidence="2">
    <location>
        <begin position="240"/>
        <end position="279"/>
    </location>
</feature>
<feature type="repeat" description="WD 7" evidence="2">
    <location>
        <begin position="364"/>
        <end position="403"/>
    </location>
</feature>
<feature type="zinc finger region" description="FYVE-type" evidence="3">
    <location>
        <begin position="281"/>
        <end position="352"/>
    </location>
</feature>
<feature type="binding site" evidence="3">
    <location>
        <position position="287"/>
    </location>
    <ligand>
        <name>Zn(2+)</name>
        <dbReference type="ChEBI" id="CHEBI:29105"/>
        <label>1</label>
    </ligand>
</feature>
<feature type="binding site" evidence="3">
    <location>
        <position position="290"/>
    </location>
    <ligand>
        <name>Zn(2+)</name>
        <dbReference type="ChEBI" id="CHEBI:29105"/>
        <label>1</label>
    </ligand>
</feature>
<feature type="binding site" evidence="3">
    <location>
        <position position="314"/>
    </location>
    <ligand>
        <name>Zn(2+)</name>
        <dbReference type="ChEBI" id="CHEBI:29105"/>
        <label>2</label>
    </ligand>
</feature>
<feature type="binding site" evidence="3">
    <location>
        <position position="317"/>
    </location>
    <ligand>
        <name>Zn(2+)</name>
        <dbReference type="ChEBI" id="CHEBI:29105"/>
        <label>2</label>
    </ligand>
</feature>
<feature type="binding site" evidence="3">
    <location>
        <position position="322"/>
    </location>
    <ligand>
        <name>Zn(2+)</name>
        <dbReference type="ChEBI" id="CHEBI:29105"/>
        <label>1</label>
    </ligand>
</feature>
<feature type="binding site" evidence="3">
    <location>
        <position position="325"/>
    </location>
    <ligand>
        <name>Zn(2+)</name>
        <dbReference type="ChEBI" id="CHEBI:29105"/>
        <label>1</label>
    </ligand>
</feature>
<feature type="binding site" evidence="3">
    <location>
        <position position="344"/>
    </location>
    <ligand>
        <name>Zn(2+)</name>
        <dbReference type="ChEBI" id="CHEBI:29105"/>
        <label>2</label>
    </ligand>
</feature>
<feature type="binding site" evidence="3">
    <location>
        <position position="347"/>
    </location>
    <ligand>
        <name>Zn(2+)</name>
        <dbReference type="ChEBI" id="CHEBI:29105"/>
        <label>2</label>
    </ligand>
</feature>
<feature type="modified residue" description="Phosphoserine" evidence="6 7">
    <location>
        <position position="408"/>
    </location>
</feature>
<feature type="sequence conflict" description="In Ref. 1; BAD90445." evidence="5" ref="1">
    <original>A</original>
    <variation>S</variation>
    <location>
        <position position="125"/>
    </location>
</feature>
<organism>
    <name type="scientific">Mus musculus</name>
    <name type="common">Mouse</name>
    <dbReference type="NCBI Taxonomy" id="10090"/>
    <lineage>
        <taxon>Eukaryota</taxon>
        <taxon>Metazoa</taxon>
        <taxon>Chordata</taxon>
        <taxon>Craniata</taxon>
        <taxon>Vertebrata</taxon>
        <taxon>Euteleostomi</taxon>
        <taxon>Mammalia</taxon>
        <taxon>Eutheria</taxon>
        <taxon>Euarchontoglires</taxon>
        <taxon>Glires</taxon>
        <taxon>Rodentia</taxon>
        <taxon>Myomorpha</taxon>
        <taxon>Muroidea</taxon>
        <taxon>Muridae</taxon>
        <taxon>Murinae</taxon>
        <taxon>Mus</taxon>
        <taxon>Mus</taxon>
    </lineage>
</organism>
<proteinExistence type="evidence at protein level"/>
<reference key="1">
    <citation type="submission" date="2005-02" db="EMBL/GenBank/DDBJ databases">
        <title>Prediction of the coding sequences of mouse homologues of KIAA Gene. The Complete nucleotide sequences of mouse KIAA-homologous cDNAs identified by screening of terminal sequences of cDNA clones randomly sampled from size-fractionated libraries.</title>
        <authorList>
            <person name="Okazaki N."/>
            <person name="Kikuno R.F."/>
            <person name="Ohara R."/>
            <person name="Inamoto S."/>
            <person name="Nagase T."/>
            <person name="Ohara O."/>
            <person name="Koga H."/>
        </authorList>
    </citation>
    <scope>NUCLEOTIDE SEQUENCE [LARGE SCALE MRNA]</scope>
    <source>
        <tissue>Brain</tissue>
    </source>
</reference>
<reference key="2">
    <citation type="journal article" date="2009" name="PLoS Biol.">
        <title>Lineage-specific biology revealed by a finished genome assembly of the mouse.</title>
        <authorList>
            <person name="Church D.M."/>
            <person name="Goodstadt L."/>
            <person name="Hillier L.W."/>
            <person name="Zody M.C."/>
            <person name="Goldstein S."/>
            <person name="She X."/>
            <person name="Bult C.J."/>
            <person name="Agarwala R."/>
            <person name="Cherry J.L."/>
            <person name="DiCuccio M."/>
            <person name="Hlavina W."/>
            <person name="Kapustin Y."/>
            <person name="Meric P."/>
            <person name="Maglott D."/>
            <person name="Birtle Z."/>
            <person name="Marques A.C."/>
            <person name="Graves T."/>
            <person name="Zhou S."/>
            <person name="Teague B."/>
            <person name="Potamousis K."/>
            <person name="Churas C."/>
            <person name="Place M."/>
            <person name="Herschleb J."/>
            <person name="Runnheim R."/>
            <person name="Forrest D."/>
            <person name="Amos-Landgraf J."/>
            <person name="Schwartz D.C."/>
            <person name="Cheng Z."/>
            <person name="Lindblad-Toh K."/>
            <person name="Eichler E.E."/>
            <person name="Ponting C.P."/>
        </authorList>
    </citation>
    <scope>NUCLEOTIDE SEQUENCE [LARGE SCALE GENOMIC DNA]</scope>
    <source>
        <strain>C57BL/6J</strain>
    </source>
</reference>
<reference key="3">
    <citation type="journal article" date="2004" name="Mol. Cell. Proteomics">
        <title>Phosphoproteomic analysis of the developing mouse brain.</title>
        <authorList>
            <person name="Ballif B.A."/>
            <person name="Villen J."/>
            <person name="Beausoleil S.A."/>
            <person name="Schwartz D."/>
            <person name="Gygi S.P."/>
        </authorList>
    </citation>
    <scope>PHOSPHORYLATION [LARGE SCALE ANALYSIS] AT SER-408</scope>
    <scope>IDENTIFICATION BY MASS SPECTROMETRY [LARGE SCALE ANALYSIS]</scope>
    <source>
        <tissue>Embryonic brain</tissue>
    </source>
</reference>
<reference key="4">
    <citation type="journal article" date="2010" name="Cell">
        <title>A tissue-specific atlas of mouse protein phosphorylation and expression.</title>
        <authorList>
            <person name="Huttlin E.L."/>
            <person name="Jedrychowski M.P."/>
            <person name="Elias J.E."/>
            <person name="Goswami T."/>
            <person name="Rad R."/>
            <person name="Beausoleil S.A."/>
            <person name="Villen J."/>
            <person name="Haas W."/>
            <person name="Sowa M.E."/>
            <person name="Gygi S.P."/>
        </authorList>
    </citation>
    <scope>PHOSPHORYLATION [LARGE SCALE ANALYSIS] AT SER-408</scope>
    <scope>IDENTIFICATION BY MASS SPECTROMETRY [LARGE SCALE ANALYSIS]</scope>
    <source>
        <tissue>Brain</tissue>
        <tissue>Brown adipose tissue</tissue>
        <tissue>Heart</tissue>
        <tissue>Kidney</tissue>
        <tissue>Liver</tissue>
        <tissue>Lung</tissue>
        <tissue>Spleen</tissue>
        <tissue>Testis</tissue>
    </source>
</reference>
<reference key="5">
    <citation type="journal article" date="2015" name="EMBO Rep.">
        <title>WDFY1 mediates TLR3/4 signaling by recruiting TRIF.</title>
        <authorList>
            <person name="Hu Y.H."/>
            <person name="Zhang Y."/>
            <person name="Jiang L.Q."/>
            <person name="Wang S."/>
            <person name="Lei C.Q."/>
            <person name="Sun M.S."/>
            <person name="Shu H.B."/>
            <person name="Liu Y."/>
        </authorList>
    </citation>
    <scope>FUNCTION</scope>
    <scope>INTERACTION WITH TLR3; TLR4 AND TICAM1</scope>
</reference>
<protein>
    <recommendedName>
        <fullName>WD repeat and FYVE domain-containing protein 1</fullName>
    </recommendedName>
    <alternativeName>
        <fullName>WD40- and FYVE domain-containing protein 1</fullName>
    </alternativeName>
</protein>
<dbReference type="EMBL" id="AK220391">
    <property type="protein sequence ID" value="BAD90445.1"/>
    <property type="status" value="ALT_INIT"/>
    <property type="molecule type" value="mRNA"/>
</dbReference>
<dbReference type="EMBL" id="AC083910">
    <property type="status" value="NOT_ANNOTATED_CDS"/>
    <property type="molecule type" value="Genomic_DNA"/>
</dbReference>
<dbReference type="EMBL" id="AC170750">
    <property type="status" value="NOT_ANNOTATED_CDS"/>
    <property type="molecule type" value="Genomic_DNA"/>
</dbReference>
<dbReference type="CCDS" id="CCDS48296.1"/>
<dbReference type="RefSeq" id="NP_001104749.1">
    <property type="nucleotide sequence ID" value="NM_001111279.1"/>
</dbReference>
<dbReference type="RefSeq" id="XP_036009349.1">
    <property type="nucleotide sequence ID" value="XM_036153456.1"/>
</dbReference>
<dbReference type="SMR" id="E9Q4P1"/>
<dbReference type="FunCoup" id="E9Q4P1">
    <property type="interactions" value="5001"/>
</dbReference>
<dbReference type="STRING" id="10090.ENSMUSP00000109140"/>
<dbReference type="iPTMnet" id="E9Q4P1"/>
<dbReference type="PhosphoSitePlus" id="E9Q4P1"/>
<dbReference type="SwissPalm" id="E9Q4P1"/>
<dbReference type="jPOST" id="E9Q4P1"/>
<dbReference type="PaxDb" id="10090-ENSMUSP00000109140"/>
<dbReference type="PeptideAtlas" id="E9Q4P1"/>
<dbReference type="ProteomicsDB" id="297891"/>
<dbReference type="Pumba" id="E9Q4P1"/>
<dbReference type="DNASU" id="69368"/>
<dbReference type="Ensembl" id="ENSMUST00000113512.8">
    <property type="protein sequence ID" value="ENSMUSP00000109140.2"/>
    <property type="gene ID" value="ENSMUSG00000073643.12"/>
</dbReference>
<dbReference type="Ensembl" id="ENSMUST00000113513.8">
    <property type="protein sequence ID" value="ENSMUSP00000109141.2"/>
    <property type="gene ID" value="ENSMUSG00000073643.12"/>
</dbReference>
<dbReference type="Ensembl" id="ENSMUST00000113514.8">
    <property type="protein sequence ID" value="ENSMUSP00000109142.2"/>
    <property type="gene ID" value="ENSMUSG00000073643.12"/>
</dbReference>
<dbReference type="Ensembl" id="ENSMUST00000113515.8">
    <property type="protein sequence ID" value="ENSMUSP00000109143.2"/>
    <property type="gene ID" value="ENSMUSG00000073643.12"/>
</dbReference>
<dbReference type="GeneID" id="69368"/>
<dbReference type="KEGG" id="mmu:69368"/>
<dbReference type="UCSC" id="uc007bqu.2">
    <property type="organism name" value="mouse"/>
</dbReference>
<dbReference type="AGR" id="MGI:1916618"/>
<dbReference type="CTD" id="57590"/>
<dbReference type="MGI" id="MGI:1916618">
    <property type="gene designation" value="Wdfy1"/>
</dbReference>
<dbReference type="VEuPathDB" id="HostDB:ENSMUSG00000073643"/>
<dbReference type="eggNOG" id="KOG1409">
    <property type="taxonomic scope" value="Eukaryota"/>
</dbReference>
<dbReference type="GeneTree" id="ENSGT00940000157731"/>
<dbReference type="HOGENOM" id="CLU_046919_0_0_1"/>
<dbReference type="InParanoid" id="E9Q4P1"/>
<dbReference type="OMA" id="IFCLGAE"/>
<dbReference type="OrthoDB" id="63070at2759"/>
<dbReference type="PhylomeDB" id="E9Q4P1"/>
<dbReference type="TreeFam" id="TF314470"/>
<dbReference type="BioGRID-ORCS" id="69368">
    <property type="hits" value="2 hits in 78 CRISPR screens"/>
</dbReference>
<dbReference type="ChiTaRS" id="Wdfy1">
    <property type="organism name" value="mouse"/>
</dbReference>
<dbReference type="PRO" id="PR:E9Q4P1"/>
<dbReference type="Proteomes" id="UP000000589">
    <property type="component" value="Chromosome 1"/>
</dbReference>
<dbReference type="RNAct" id="E9Q4P1">
    <property type="molecule type" value="protein"/>
</dbReference>
<dbReference type="Bgee" id="ENSMUSG00000073643">
    <property type="expression patterns" value="Expressed in spermatid and 234 other cell types or tissues"/>
</dbReference>
<dbReference type="ExpressionAtlas" id="E9Q4P1">
    <property type="expression patterns" value="baseline and differential"/>
</dbReference>
<dbReference type="GO" id="GO:0030054">
    <property type="term" value="C:cell junction"/>
    <property type="evidence" value="ECO:0007669"/>
    <property type="project" value="Ensembl"/>
</dbReference>
<dbReference type="GO" id="GO:0005829">
    <property type="term" value="C:cytosol"/>
    <property type="evidence" value="ECO:0007669"/>
    <property type="project" value="Ensembl"/>
</dbReference>
<dbReference type="GO" id="GO:0005769">
    <property type="term" value="C:early endosome"/>
    <property type="evidence" value="ECO:0000314"/>
    <property type="project" value="UniProtKB"/>
</dbReference>
<dbReference type="GO" id="GO:0005794">
    <property type="term" value="C:Golgi apparatus"/>
    <property type="evidence" value="ECO:0007669"/>
    <property type="project" value="Ensembl"/>
</dbReference>
<dbReference type="GO" id="GO:0005730">
    <property type="term" value="C:nucleolus"/>
    <property type="evidence" value="ECO:0007669"/>
    <property type="project" value="Ensembl"/>
</dbReference>
<dbReference type="GO" id="GO:0005545">
    <property type="term" value="F:1-phosphatidylinositol binding"/>
    <property type="evidence" value="ECO:0007669"/>
    <property type="project" value="Ensembl"/>
</dbReference>
<dbReference type="GO" id="GO:0008270">
    <property type="term" value="F:zinc ion binding"/>
    <property type="evidence" value="ECO:0007669"/>
    <property type="project" value="UniProtKB-KW"/>
</dbReference>
<dbReference type="GO" id="GO:0034141">
    <property type="term" value="P:positive regulation of toll-like receptor 3 signaling pathway"/>
    <property type="evidence" value="ECO:0000315"/>
    <property type="project" value="UniProtKB"/>
</dbReference>
<dbReference type="GO" id="GO:0034145">
    <property type="term" value="P:positive regulation of toll-like receptor 4 signaling pathway"/>
    <property type="evidence" value="ECO:0000315"/>
    <property type="project" value="UniProtKB"/>
</dbReference>
<dbReference type="CDD" id="cd15756">
    <property type="entry name" value="FYVE_WDFY1"/>
    <property type="match status" value="1"/>
</dbReference>
<dbReference type="FunFam" id="2.130.10.10:FF:000285">
    <property type="entry name" value="WD repeat and FYVE domain-containing protein 1"/>
    <property type="match status" value="1"/>
</dbReference>
<dbReference type="FunFam" id="2.130.10.10:FF:000433">
    <property type="entry name" value="WD repeat and FYVE domain-containing protein 1"/>
    <property type="match status" value="1"/>
</dbReference>
<dbReference type="FunFam" id="3.30.40.10:FF:000105">
    <property type="entry name" value="WD repeat and FYVE domain-containing protein 2"/>
    <property type="match status" value="1"/>
</dbReference>
<dbReference type="Gene3D" id="2.130.10.10">
    <property type="entry name" value="YVTN repeat-like/Quinoprotein amine dehydrogenase"/>
    <property type="match status" value="2"/>
</dbReference>
<dbReference type="Gene3D" id="3.30.40.10">
    <property type="entry name" value="Zinc/RING finger domain, C3HC4 (zinc finger)"/>
    <property type="match status" value="1"/>
</dbReference>
<dbReference type="InterPro" id="IPR020472">
    <property type="entry name" value="G-protein_beta_WD-40_rep"/>
</dbReference>
<dbReference type="InterPro" id="IPR015943">
    <property type="entry name" value="WD40/YVTN_repeat-like_dom_sf"/>
</dbReference>
<dbReference type="InterPro" id="IPR019775">
    <property type="entry name" value="WD40_repeat_CS"/>
</dbReference>
<dbReference type="InterPro" id="IPR036322">
    <property type="entry name" value="WD40_repeat_dom_sf"/>
</dbReference>
<dbReference type="InterPro" id="IPR001680">
    <property type="entry name" value="WD40_rpt"/>
</dbReference>
<dbReference type="InterPro" id="IPR042234">
    <property type="entry name" value="WDFY1/WDFY2"/>
</dbReference>
<dbReference type="InterPro" id="IPR042733">
    <property type="entry name" value="WDFY1_FYVE"/>
</dbReference>
<dbReference type="InterPro" id="IPR000306">
    <property type="entry name" value="Znf_FYVE"/>
</dbReference>
<dbReference type="InterPro" id="IPR017455">
    <property type="entry name" value="Znf_FYVE-rel"/>
</dbReference>
<dbReference type="InterPro" id="IPR011011">
    <property type="entry name" value="Znf_FYVE_PHD"/>
</dbReference>
<dbReference type="InterPro" id="IPR013083">
    <property type="entry name" value="Znf_RING/FYVE/PHD"/>
</dbReference>
<dbReference type="PANTHER" id="PTHR46189">
    <property type="entry name" value="LD41958P"/>
    <property type="match status" value="1"/>
</dbReference>
<dbReference type="PANTHER" id="PTHR46189:SF2">
    <property type="entry name" value="WD REPEAT AND FYVE DOMAIN-CONTAINING PROTEIN 1"/>
    <property type="match status" value="1"/>
</dbReference>
<dbReference type="Pfam" id="PF01363">
    <property type="entry name" value="FYVE"/>
    <property type="match status" value="1"/>
</dbReference>
<dbReference type="Pfam" id="PF00400">
    <property type="entry name" value="WD40"/>
    <property type="match status" value="5"/>
</dbReference>
<dbReference type="PRINTS" id="PR00320">
    <property type="entry name" value="GPROTEINBRPT"/>
</dbReference>
<dbReference type="SMART" id="SM00064">
    <property type="entry name" value="FYVE"/>
    <property type="match status" value="1"/>
</dbReference>
<dbReference type="SMART" id="SM00320">
    <property type="entry name" value="WD40"/>
    <property type="match status" value="7"/>
</dbReference>
<dbReference type="SUPFAM" id="SSF57903">
    <property type="entry name" value="FYVE/PHD zinc finger"/>
    <property type="match status" value="1"/>
</dbReference>
<dbReference type="SUPFAM" id="SSF50978">
    <property type="entry name" value="WD40 repeat-like"/>
    <property type="match status" value="1"/>
</dbReference>
<dbReference type="PROSITE" id="PS00678">
    <property type="entry name" value="WD_REPEATS_1"/>
    <property type="match status" value="3"/>
</dbReference>
<dbReference type="PROSITE" id="PS50082">
    <property type="entry name" value="WD_REPEATS_2"/>
    <property type="match status" value="3"/>
</dbReference>
<dbReference type="PROSITE" id="PS50294">
    <property type="entry name" value="WD_REPEATS_REGION"/>
    <property type="match status" value="1"/>
</dbReference>
<dbReference type="PROSITE" id="PS50178">
    <property type="entry name" value="ZF_FYVE"/>
    <property type="match status" value="1"/>
</dbReference>
<accession>E9Q4P1</accession>
<accession>Q5DTX9</accession>
<gene>
    <name type="primary">Wdfy1</name>
    <name type="synonym">Kiaa1435</name>
</gene>